<accession>Q9HUW3</accession>
<name>PRMA_PSEAE</name>
<comment type="function">
    <text evidence="1">Methylates ribosomal protein L11.</text>
</comment>
<comment type="catalytic activity">
    <reaction evidence="1">
        <text>L-lysyl-[protein] + 3 S-adenosyl-L-methionine = N(6),N(6),N(6)-trimethyl-L-lysyl-[protein] + 3 S-adenosyl-L-homocysteine + 3 H(+)</text>
        <dbReference type="Rhea" id="RHEA:54192"/>
        <dbReference type="Rhea" id="RHEA-COMP:9752"/>
        <dbReference type="Rhea" id="RHEA-COMP:13826"/>
        <dbReference type="ChEBI" id="CHEBI:15378"/>
        <dbReference type="ChEBI" id="CHEBI:29969"/>
        <dbReference type="ChEBI" id="CHEBI:57856"/>
        <dbReference type="ChEBI" id="CHEBI:59789"/>
        <dbReference type="ChEBI" id="CHEBI:61961"/>
    </reaction>
</comment>
<comment type="subcellular location">
    <subcellularLocation>
        <location evidence="1">Cytoplasm</location>
    </subcellularLocation>
</comment>
<comment type="similarity">
    <text evidence="1">Belongs to the methyltransferase superfamily. PrmA family.</text>
</comment>
<evidence type="ECO:0000255" key="1">
    <source>
        <dbReference type="HAMAP-Rule" id="MF_00735"/>
    </source>
</evidence>
<proteinExistence type="inferred from homology"/>
<sequence>MPWLQVRLAITPEQAETYEDALLEVGAVSVTFMDAEDQPIFEPDLGTTPLWSRTHLLALFEADTDETALLAHLALLTGGDLPEHHVEEIADQDWERSWMDNFQPMRFGRRLWIVPSWHAAPEPDAVNLLLDPGLAFGTGTHPTTALCLEWLDGQELAGRQVLDFGCGSGILAIAALLLGAERAVGTDIDPQALEASRDNASRNGIEPARFPVYLPADLPQRQADVLVANILAGPLVSLAPQLTGLVRPGGLLALSGILAEQAEEVRAAYSAHFDLDPTAEREGWIRISGRRRAD</sequence>
<feature type="chain" id="PRO_0000192292" description="Ribosomal protein L11 methyltransferase">
    <location>
        <begin position="1"/>
        <end position="294"/>
    </location>
</feature>
<feature type="binding site" evidence="1">
    <location>
        <position position="144"/>
    </location>
    <ligand>
        <name>S-adenosyl-L-methionine</name>
        <dbReference type="ChEBI" id="CHEBI:59789"/>
    </ligand>
</feature>
<feature type="binding site" evidence="1">
    <location>
        <position position="165"/>
    </location>
    <ligand>
        <name>S-adenosyl-L-methionine</name>
        <dbReference type="ChEBI" id="CHEBI:59789"/>
    </ligand>
</feature>
<feature type="binding site" evidence="1">
    <location>
        <position position="187"/>
    </location>
    <ligand>
        <name>S-adenosyl-L-methionine</name>
        <dbReference type="ChEBI" id="CHEBI:59789"/>
    </ligand>
</feature>
<feature type="binding site" evidence="1">
    <location>
        <position position="229"/>
    </location>
    <ligand>
        <name>S-adenosyl-L-methionine</name>
        <dbReference type="ChEBI" id="CHEBI:59789"/>
    </ligand>
</feature>
<keyword id="KW-0963">Cytoplasm</keyword>
<keyword id="KW-0489">Methyltransferase</keyword>
<keyword id="KW-1185">Reference proteome</keyword>
<keyword id="KW-0949">S-adenosyl-L-methionine</keyword>
<keyword id="KW-0808">Transferase</keyword>
<protein>
    <recommendedName>
        <fullName evidence="1">Ribosomal protein L11 methyltransferase</fullName>
        <shortName evidence="1">L11 Mtase</shortName>
        <ecNumber evidence="1">2.1.1.-</ecNumber>
    </recommendedName>
</protein>
<gene>
    <name evidence="1" type="primary">prmA</name>
    <name type="ordered locus">PA4850</name>
</gene>
<reference key="1">
    <citation type="journal article" date="2000" name="Nature">
        <title>Complete genome sequence of Pseudomonas aeruginosa PAO1, an opportunistic pathogen.</title>
        <authorList>
            <person name="Stover C.K."/>
            <person name="Pham X.-Q.T."/>
            <person name="Erwin A.L."/>
            <person name="Mizoguchi S.D."/>
            <person name="Warrener P."/>
            <person name="Hickey M.J."/>
            <person name="Brinkman F.S.L."/>
            <person name="Hufnagle W.O."/>
            <person name="Kowalik D.J."/>
            <person name="Lagrou M."/>
            <person name="Garber R.L."/>
            <person name="Goltry L."/>
            <person name="Tolentino E."/>
            <person name="Westbrock-Wadman S."/>
            <person name="Yuan Y."/>
            <person name="Brody L.L."/>
            <person name="Coulter S.N."/>
            <person name="Folger K.R."/>
            <person name="Kas A."/>
            <person name="Larbig K."/>
            <person name="Lim R.M."/>
            <person name="Smith K.A."/>
            <person name="Spencer D.H."/>
            <person name="Wong G.K.-S."/>
            <person name="Wu Z."/>
            <person name="Paulsen I.T."/>
            <person name="Reizer J."/>
            <person name="Saier M.H. Jr."/>
            <person name="Hancock R.E.W."/>
            <person name="Lory S."/>
            <person name="Olson M.V."/>
        </authorList>
    </citation>
    <scope>NUCLEOTIDE SEQUENCE [LARGE SCALE GENOMIC DNA]</scope>
    <source>
        <strain>ATCC 15692 / DSM 22644 / CIP 104116 / JCM 14847 / LMG 12228 / 1C / PRS 101 / PAO1</strain>
    </source>
</reference>
<dbReference type="EC" id="2.1.1.-" evidence="1"/>
<dbReference type="EMBL" id="AE004091">
    <property type="protein sequence ID" value="AAG08235.1"/>
    <property type="molecule type" value="Genomic_DNA"/>
</dbReference>
<dbReference type="PIR" id="B83040">
    <property type="entry name" value="B83040"/>
</dbReference>
<dbReference type="RefSeq" id="NP_253537.1">
    <property type="nucleotide sequence ID" value="NC_002516.2"/>
</dbReference>
<dbReference type="RefSeq" id="WP_003112237.1">
    <property type="nucleotide sequence ID" value="NZ_QZGE01000002.1"/>
</dbReference>
<dbReference type="SMR" id="Q9HUW3"/>
<dbReference type="FunCoup" id="Q9HUW3">
    <property type="interactions" value="507"/>
</dbReference>
<dbReference type="STRING" id="208964.PA4850"/>
<dbReference type="PaxDb" id="208964-PA4850"/>
<dbReference type="GeneID" id="878325"/>
<dbReference type="KEGG" id="pae:PA4850"/>
<dbReference type="PATRIC" id="fig|208964.12.peg.5082"/>
<dbReference type="PseudoCAP" id="PA4850"/>
<dbReference type="HOGENOM" id="CLU_049382_4_1_6"/>
<dbReference type="InParanoid" id="Q9HUW3"/>
<dbReference type="OrthoDB" id="9785995at2"/>
<dbReference type="PhylomeDB" id="Q9HUW3"/>
<dbReference type="BioCyc" id="PAER208964:G1FZ6-4964-MONOMER"/>
<dbReference type="Proteomes" id="UP000002438">
    <property type="component" value="Chromosome"/>
</dbReference>
<dbReference type="GO" id="GO:0005829">
    <property type="term" value="C:cytosol"/>
    <property type="evidence" value="ECO:0000318"/>
    <property type="project" value="GO_Central"/>
</dbReference>
<dbReference type="GO" id="GO:0016279">
    <property type="term" value="F:protein-lysine N-methyltransferase activity"/>
    <property type="evidence" value="ECO:0000318"/>
    <property type="project" value="GO_Central"/>
</dbReference>
<dbReference type="GO" id="GO:0032259">
    <property type="term" value="P:methylation"/>
    <property type="evidence" value="ECO:0007669"/>
    <property type="project" value="UniProtKB-KW"/>
</dbReference>
<dbReference type="CDD" id="cd02440">
    <property type="entry name" value="AdoMet_MTases"/>
    <property type="match status" value="1"/>
</dbReference>
<dbReference type="Gene3D" id="3.40.50.150">
    <property type="entry name" value="Vaccinia Virus protein VP39"/>
    <property type="match status" value="1"/>
</dbReference>
<dbReference type="HAMAP" id="MF_00735">
    <property type="entry name" value="Methyltr_PrmA"/>
    <property type="match status" value="1"/>
</dbReference>
<dbReference type="InterPro" id="IPR050078">
    <property type="entry name" value="Ribosomal_L11_MeTrfase_PrmA"/>
</dbReference>
<dbReference type="InterPro" id="IPR004498">
    <property type="entry name" value="Ribosomal_PrmA_MeTrfase"/>
</dbReference>
<dbReference type="InterPro" id="IPR029063">
    <property type="entry name" value="SAM-dependent_MTases_sf"/>
</dbReference>
<dbReference type="NCBIfam" id="TIGR00406">
    <property type="entry name" value="prmA"/>
    <property type="match status" value="1"/>
</dbReference>
<dbReference type="PANTHER" id="PTHR43648">
    <property type="entry name" value="ELECTRON TRANSFER FLAVOPROTEIN BETA SUBUNIT LYSINE METHYLTRANSFERASE"/>
    <property type="match status" value="1"/>
</dbReference>
<dbReference type="PANTHER" id="PTHR43648:SF1">
    <property type="entry name" value="ELECTRON TRANSFER FLAVOPROTEIN BETA SUBUNIT LYSINE METHYLTRANSFERASE"/>
    <property type="match status" value="1"/>
</dbReference>
<dbReference type="Pfam" id="PF06325">
    <property type="entry name" value="PrmA"/>
    <property type="match status" value="1"/>
</dbReference>
<dbReference type="PIRSF" id="PIRSF000401">
    <property type="entry name" value="RPL11_MTase"/>
    <property type="match status" value="1"/>
</dbReference>
<dbReference type="SUPFAM" id="SSF53335">
    <property type="entry name" value="S-adenosyl-L-methionine-dependent methyltransferases"/>
    <property type="match status" value="1"/>
</dbReference>
<organism>
    <name type="scientific">Pseudomonas aeruginosa (strain ATCC 15692 / DSM 22644 / CIP 104116 / JCM 14847 / LMG 12228 / 1C / PRS 101 / PAO1)</name>
    <dbReference type="NCBI Taxonomy" id="208964"/>
    <lineage>
        <taxon>Bacteria</taxon>
        <taxon>Pseudomonadati</taxon>
        <taxon>Pseudomonadota</taxon>
        <taxon>Gammaproteobacteria</taxon>
        <taxon>Pseudomonadales</taxon>
        <taxon>Pseudomonadaceae</taxon>
        <taxon>Pseudomonas</taxon>
    </lineage>
</organism>